<dbReference type="EC" id="3.4.22.-"/>
<dbReference type="EMBL" id="X63567">
    <property type="protein sequence ID" value="CAA45127.1"/>
    <property type="molecule type" value="mRNA"/>
</dbReference>
<dbReference type="PIR" id="S19649">
    <property type="entry name" value="S19649"/>
</dbReference>
<dbReference type="SMR" id="P13277"/>
<dbReference type="MEROPS" id="I29.003"/>
<dbReference type="OrthoDB" id="10263972at2759"/>
<dbReference type="GO" id="GO:0008234">
    <property type="term" value="F:cysteine-type peptidase activity"/>
    <property type="evidence" value="ECO:0007669"/>
    <property type="project" value="UniProtKB-KW"/>
</dbReference>
<dbReference type="GO" id="GO:0006508">
    <property type="term" value="P:proteolysis"/>
    <property type="evidence" value="ECO:0007669"/>
    <property type="project" value="UniProtKB-KW"/>
</dbReference>
<dbReference type="CDD" id="cd02248">
    <property type="entry name" value="Peptidase_C1A"/>
    <property type="match status" value="1"/>
</dbReference>
<dbReference type="FunFam" id="3.90.70.10:FF:000006">
    <property type="entry name" value="Cathepsin S"/>
    <property type="match status" value="1"/>
</dbReference>
<dbReference type="Gene3D" id="3.90.70.10">
    <property type="entry name" value="Cysteine proteinases"/>
    <property type="match status" value="1"/>
</dbReference>
<dbReference type="InterPro" id="IPR038765">
    <property type="entry name" value="Papain-like_cys_pep_sf"/>
</dbReference>
<dbReference type="InterPro" id="IPR025661">
    <property type="entry name" value="Pept_asp_AS"/>
</dbReference>
<dbReference type="InterPro" id="IPR000169">
    <property type="entry name" value="Pept_cys_AS"/>
</dbReference>
<dbReference type="InterPro" id="IPR025660">
    <property type="entry name" value="Pept_his_AS"/>
</dbReference>
<dbReference type="InterPro" id="IPR013128">
    <property type="entry name" value="Peptidase_C1A"/>
</dbReference>
<dbReference type="InterPro" id="IPR000668">
    <property type="entry name" value="Peptidase_C1A_C"/>
</dbReference>
<dbReference type="InterPro" id="IPR039417">
    <property type="entry name" value="Peptidase_C1A_papain-like"/>
</dbReference>
<dbReference type="InterPro" id="IPR013201">
    <property type="entry name" value="Prot_inhib_I29"/>
</dbReference>
<dbReference type="PANTHER" id="PTHR12411">
    <property type="entry name" value="CYSTEINE PROTEASE FAMILY C1-RELATED"/>
    <property type="match status" value="1"/>
</dbReference>
<dbReference type="Pfam" id="PF08246">
    <property type="entry name" value="Inhibitor_I29"/>
    <property type="match status" value="1"/>
</dbReference>
<dbReference type="Pfam" id="PF00112">
    <property type="entry name" value="Peptidase_C1"/>
    <property type="match status" value="1"/>
</dbReference>
<dbReference type="PRINTS" id="PR00705">
    <property type="entry name" value="PAPAIN"/>
</dbReference>
<dbReference type="SMART" id="SM00848">
    <property type="entry name" value="Inhibitor_I29"/>
    <property type="match status" value="1"/>
</dbReference>
<dbReference type="SMART" id="SM00645">
    <property type="entry name" value="Pept_C1"/>
    <property type="match status" value="1"/>
</dbReference>
<dbReference type="SUPFAM" id="SSF54001">
    <property type="entry name" value="Cysteine proteinases"/>
    <property type="match status" value="1"/>
</dbReference>
<dbReference type="PROSITE" id="PS00640">
    <property type="entry name" value="THIOL_PROTEASE_ASN"/>
    <property type="match status" value="1"/>
</dbReference>
<dbReference type="PROSITE" id="PS00139">
    <property type="entry name" value="THIOL_PROTEASE_CYS"/>
    <property type="match status" value="1"/>
</dbReference>
<dbReference type="PROSITE" id="PS00639">
    <property type="entry name" value="THIOL_PROTEASE_HIS"/>
    <property type="match status" value="1"/>
</dbReference>
<keyword id="KW-0903">Direct protein sequencing</keyword>
<keyword id="KW-1015">Disulfide bond</keyword>
<keyword id="KW-0378">Hydrolase</keyword>
<keyword id="KW-0645">Protease</keyword>
<keyword id="KW-0732">Signal</keyword>
<keyword id="KW-0788">Thiol protease</keyword>
<keyword id="KW-0865">Zymogen</keyword>
<protein>
    <recommendedName>
        <fullName>Digestive cysteine proteinase 1</fullName>
        <ecNumber>3.4.22.-</ecNumber>
    </recommendedName>
</protein>
<comment type="activity regulation">
    <text>Inhibited by E-64, antipain, leupeptin, heavy metal ions, iodoacetic acid, dithionitrobenzene, p-hydroxymercuri-benzoate; activated by mercaptoethanol and dithiothreitol.</text>
</comment>
<comment type="similarity">
    <text evidence="3 4 5">Belongs to the peptidase C1 family.</text>
</comment>
<accession>P13277</accession>
<reference key="1">
    <citation type="journal article" date="1991" name="FEBS Lett.">
        <title>Molecular cloning of three cDNAs that encode cysteine proteinases in the digestive gland of the American lobster (Homarus americanus).</title>
        <authorList>
            <person name="Laycock M.V."/>
            <person name="MacKay R.M."/>
            <person name="Di Fruscio M."/>
            <person name="Gallant J.W."/>
        </authorList>
    </citation>
    <scope>NUCLEOTIDE SEQUENCE [MRNA]</scope>
    <source>
        <tissue>Digestive gland</tissue>
    </source>
</reference>
<reference key="2">
    <citation type="journal article" date="1992" name="FEBS Lett.">
        <authorList>
            <person name="Laycock M.V."/>
            <person name="MacKay R.M."/>
            <person name="Di Fruscio M."/>
            <person name="Gallant J.W."/>
        </authorList>
    </citation>
    <scope>ERRATUM OF PUBMED:1959590</scope>
</reference>
<reference key="3">
    <citation type="journal article" date="1989" name="Biochem. J.">
        <title>Purification and characterization of a digestive cysteine proteinase from the American lobster (Homarus americanus).</title>
        <authorList>
            <person name="Laycock M.V."/>
            <person name="Hirama T."/>
            <person name="Hasnain S."/>
            <person name="Watson D."/>
            <person name="Storer A.C."/>
        </authorList>
    </citation>
    <scope>PROTEIN SEQUENCE OF 106-133</scope>
    <source>
        <tissue>Digestive juice</tissue>
    </source>
</reference>
<feature type="signal peptide" evidence="2">
    <location>
        <begin position="1"/>
        <end position="16"/>
    </location>
</feature>
<feature type="propeptide" id="PRO_0000026392" description="Activation peptide" evidence="6">
    <location>
        <begin position="17"/>
        <end position="105"/>
    </location>
</feature>
<feature type="chain" id="PRO_0000026393" description="Digestive cysteine proteinase 1">
    <location>
        <begin position="106"/>
        <end position="322"/>
    </location>
</feature>
<feature type="active site" evidence="1">
    <location>
        <position position="129"/>
    </location>
</feature>
<feature type="active site" evidence="1">
    <location>
        <position position="269"/>
    </location>
</feature>
<feature type="active site" evidence="1">
    <location>
        <position position="289"/>
    </location>
</feature>
<feature type="disulfide bond" evidence="1">
    <location>
        <begin position="126"/>
        <end position="170"/>
    </location>
</feature>
<feature type="disulfide bond" evidence="1">
    <location>
        <begin position="160"/>
        <end position="203"/>
    </location>
</feature>
<feature type="disulfide bond" evidence="1">
    <location>
        <begin position="262"/>
        <end position="311"/>
    </location>
</feature>
<feature type="sequence conflict" description="In Ref. 3; AA sequence." evidence="7" ref="3">
    <original>K</original>
    <variation>E</variation>
    <location>
        <position position="114"/>
    </location>
</feature>
<gene>
    <name type="primary">LCP1</name>
</gene>
<evidence type="ECO:0000250" key="1"/>
<evidence type="ECO:0000255" key="2"/>
<evidence type="ECO:0000255" key="3">
    <source>
        <dbReference type="PROSITE-ProRule" id="PRU10088"/>
    </source>
</evidence>
<evidence type="ECO:0000255" key="4">
    <source>
        <dbReference type="PROSITE-ProRule" id="PRU10089"/>
    </source>
</evidence>
<evidence type="ECO:0000255" key="5">
    <source>
        <dbReference type="PROSITE-ProRule" id="PRU10090"/>
    </source>
</evidence>
<evidence type="ECO:0000269" key="6">
    <source>
    </source>
</evidence>
<evidence type="ECO:0000305" key="7"/>
<sequence length="322" mass="35498">MKVVALFLFGLALAAANPSWEEFKGKFGRKYVDLEEERYRLNVFLDNLQYIEEFNKKYERGEVTYNLAINQFSDMTNEKFNAVMKGYKKGPRPAAVFTSTDAAPESTEVDWRTKGAVTPVKDQGQCGSCWAFSTTGGIEGQHFLKTGRLVSLSEQQLVDCAGGSYYNQGCNGGWVERAIMYVRDNGGVDTESSYPYEARDNTCRFNSNTIGATCTGYVGIAQGSESALKTATRDIGPISVAIDASHRSFQSYYTGVYYEPSCSSSQLDHAVLAVGYGSEGGQDFWLVKNSWATSWGESGYIKMARNRNNNCGIATDACYPTV</sequence>
<proteinExistence type="evidence at protein level"/>
<organism>
    <name type="scientific">Homarus americanus</name>
    <name type="common">American lobster</name>
    <dbReference type="NCBI Taxonomy" id="6706"/>
    <lineage>
        <taxon>Eukaryota</taxon>
        <taxon>Metazoa</taxon>
        <taxon>Ecdysozoa</taxon>
        <taxon>Arthropoda</taxon>
        <taxon>Crustacea</taxon>
        <taxon>Multicrustacea</taxon>
        <taxon>Malacostraca</taxon>
        <taxon>Eumalacostraca</taxon>
        <taxon>Eucarida</taxon>
        <taxon>Decapoda</taxon>
        <taxon>Pleocyemata</taxon>
        <taxon>Astacidea</taxon>
        <taxon>Nephropoidea</taxon>
        <taxon>Nephropidae</taxon>
        <taxon>Homarus</taxon>
    </lineage>
</organism>
<name>CYSP1_HOMAM</name>